<name>TXL3A_SCOMO</name>
<comment type="subcellular location">
    <subcellularLocation>
        <location evidence="4">Secreted</location>
    </subcellularLocation>
</comment>
<comment type="tissue specificity">
    <text evidence="4">Expressed by the venom gland.</text>
</comment>
<comment type="similarity">
    <text evidence="3">Belongs to the scoloptoxin-21 family.</text>
</comment>
<comment type="online information" name="National Center for Biotechnology Information (NCBI)">
    <link uri="https://www.ncbi.nlm.nih.gov/nuccore/GASH01000174"/>
</comment>
<feature type="signal peptide" evidence="1">
    <location>
        <begin position="1"/>
        <end position="21"/>
    </location>
</feature>
<feature type="chain" id="PRO_0000446831" description="U-scoloptoxin(21)-Sm3a" evidence="3">
    <location>
        <begin position="22"/>
        <end position="82"/>
    </location>
</feature>
<reference key="1">
    <citation type="journal article" date="2014" name="Mol. Biol. Evol.">
        <title>Clawing through evolution: toxin diversification and convergence in the ancient lineage Chilopoda (centipedes).</title>
        <authorList>
            <person name="Undheim E.A."/>
            <person name="Jones A."/>
            <person name="Clauser K.R."/>
            <person name="Holland J.W."/>
            <person name="Pineda S.S."/>
            <person name="King G.F."/>
            <person name="Fry B.G."/>
        </authorList>
    </citation>
    <scope>NUCLEOTIDE SEQUENCE [MRNA]</scope>
    <scope>NOMENCLATURE</scope>
    <source>
        <tissue>Venom gland</tissue>
    </source>
</reference>
<accession>P0DQF4</accession>
<proteinExistence type="inferred from homology"/>
<evidence type="ECO:0000255" key="1"/>
<evidence type="ECO:0000303" key="2">
    <source>
    </source>
</evidence>
<evidence type="ECO:0000305" key="3"/>
<evidence type="ECO:0000305" key="4">
    <source>
    </source>
</evidence>
<protein>
    <recommendedName>
        <fullName evidence="2">U-scoloptoxin(21)-Sm3a</fullName>
        <shortName evidence="2">U-SLPTX(21)-Sm3a</shortName>
    </recommendedName>
</protein>
<sequence>MKIIALLLMVFLDFIIVNXAEQNEKKRRDNLGIPGAGDTEDANQAYKIAQDLQYKNSDSSPGKRSIMLSKLKNNAKRQFSEN</sequence>
<organism>
    <name type="scientific">Scolopendra morsitans</name>
    <name type="common">Tanzanian blue ringleg centipede</name>
    <dbReference type="NCBI Taxonomy" id="943129"/>
    <lineage>
        <taxon>Eukaryota</taxon>
        <taxon>Metazoa</taxon>
        <taxon>Ecdysozoa</taxon>
        <taxon>Arthropoda</taxon>
        <taxon>Myriapoda</taxon>
        <taxon>Chilopoda</taxon>
        <taxon>Pleurostigmophora</taxon>
        <taxon>Scolopendromorpha</taxon>
        <taxon>Scolopendridae</taxon>
        <taxon>Scolopendra</taxon>
    </lineage>
</organism>
<keyword id="KW-0964">Secreted</keyword>
<keyword id="KW-0732">Signal</keyword>
<keyword id="KW-0800">Toxin</keyword>
<dbReference type="GO" id="GO:0005576">
    <property type="term" value="C:extracellular region"/>
    <property type="evidence" value="ECO:0007669"/>
    <property type="project" value="UniProtKB-SubCell"/>
</dbReference>
<dbReference type="GO" id="GO:0090729">
    <property type="term" value="F:toxin activity"/>
    <property type="evidence" value="ECO:0007669"/>
    <property type="project" value="UniProtKB-KW"/>
</dbReference>